<reference key="1">
    <citation type="journal article" date="2019" name="J. Am. Chem. Soc.">
        <title>Peniphenone and penilactone formation in Penicillium crustosum via 1,4-Michael additions of ortho-quinone methide from hydroxyclavatol to gamma-butyrolactones from Crustosic Acid.</title>
        <authorList>
            <person name="Fan J."/>
            <person name="Liao G."/>
            <person name="Kindinger F."/>
            <person name="Ludwig-Radtke L."/>
            <person name="Yin W.B."/>
            <person name="Li S.M."/>
        </authorList>
    </citation>
    <scope>NUCLEOTIDE SEQUENCE [GENOMIC DNA]</scope>
    <scope>FUNCTION</scope>
    <scope>DISRUPTION PHENOTYPE</scope>
    <scope>CATALYTIC ACTIVITY</scope>
    <scope>BIOPHYSICOCHEMICAL PROPERTIES</scope>
    <scope>PATHWAY</scope>
    <source>
        <strain>PRB-2</strain>
    </source>
</reference>
<reference key="2">
    <citation type="journal article" date="2020" name="J. Org. Chem.">
        <title>Increasing Structural Diversity of Natural Products by Michael Addition with ortho-Quinone Methide as the Acceptor.</title>
        <authorList>
            <person name="Liao G."/>
            <person name="Fan J."/>
            <person name="Ludwig-Radtke L."/>
            <person name="Backhaus K."/>
            <person name="Li S.M."/>
        </authorList>
    </citation>
    <scope>FUNCTION</scope>
</reference>
<accession>A0A481WNL2</accession>
<gene>
    <name evidence="6" type="primary">claD</name>
</gene>
<sequence length="338" mass="38170">MPVLSNPSFYLPLVDITPFLENPHGAAAQDVIESVRTACKSTGFFQIKGHQVPLRLQKSVFEASARFFALPLKNKLELDSRKTVGFRGYDVMETQSYELEFGAVQEADALRDIKEGFFIATDLPPDHPHVANGRFLQGPNVWPKPEQLAPEDFQSVLEEYYTEMQRLSHVVLSLLAATLPYGPHVFDELETCDPMSLLRLLHYPRGLEKQDGKKLQLGAGEHTDFGTFTLLLQDEHPGLEVQDSVTGEWHGVPPQEDVYIVNVADILSTMTEGDYKSSVHRVWNIKSNDRYSVVFFYDGNLDYKVKPLRSSGQDENEEIDAPTIEEHVRSRLTASYAI</sequence>
<dbReference type="EC" id="1.14.-.-" evidence="4"/>
<dbReference type="EMBL" id="MK360918">
    <property type="protein sequence ID" value="QBK15042.1"/>
    <property type="molecule type" value="Genomic_DNA"/>
</dbReference>
<dbReference type="SMR" id="A0A481WNL2"/>
<dbReference type="OrthoDB" id="288590at2759"/>
<dbReference type="GO" id="GO:0051213">
    <property type="term" value="F:dioxygenase activity"/>
    <property type="evidence" value="ECO:0007669"/>
    <property type="project" value="UniProtKB-KW"/>
</dbReference>
<dbReference type="GO" id="GO:0046872">
    <property type="term" value="F:metal ion binding"/>
    <property type="evidence" value="ECO:0007669"/>
    <property type="project" value="UniProtKB-KW"/>
</dbReference>
<dbReference type="GO" id="GO:0044283">
    <property type="term" value="P:small molecule biosynthetic process"/>
    <property type="evidence" value="ECO:0007669"/>
    <property type="project" value="UniProtKB-ARBA"/>
</dbReference>
<dbReference type="Gene3D" id="2.60.120.330">
    <property type="entry name" value="B-lactam Antibiotic, Isopenicillin N Synthase, Chain"/>
    <property type="match status" value="1"/>
</dbReference>
<dbReference type="InterPro" id="IPR026992">
    <property type="entry name" value="DIOX_N"/>
</dbReference>
<dbReference type="InterPro" id="IPR044861">
    <property type="entry name" value="IPNS-like_FE2OG_OXY"/>
</dbReference>
<dbReference type="InterPro" id="IPR027443">
    <property type="entry name" value="IPNS-like_sf"/>
</dbReference>
<dbReference type="InterPro" id="IPR050231">
    <property type="entry name" value="Iron_ascorbate_oxido_reductase"/>
</dbReference>
<dbReference type="InterPro" id="IPR005123">
    <property type="entry name" value="Oxoglu/Fe-dep_dioxygenase_dom"/>
</dbReference>
<dbReference type="PANTHER" id="PTHR47990">
    <property type="entry name" value="2-OXOGLUTARATE (2OG) AND FE(II)-DEPENDENT OXYGENASE SUPERFAMILY PROTEIN-RELATED"/>
    <property type="match status" value="1"/>
</dbReference>
<dbReference type="Pfam" id="PF03171">
    <property type="entry name" value="2OG-FeII_Oxy"/>
    <property type="match status" value="1"/>
</dbReference>
<dbReference type="Pfam" id="PF14226">
    <property type="entry name" value="DIOX_N"/>
    <property type="match status" value="1"/>
</dbReference>
<dbReference type="PRINTS" id="PR00682">
    <property type="entry name" value="IPNSYNTHASE"/>
</dbReference>
<dbReference type="SUPFAM" id="SSF51197">
    <property type="entry name" value="Clavaminate synthase-like"/>
    <property type="match status" value="1"/>
</dbReference>
<dbReference type="PROSITE" id="PS51471">
    <property type="entry name" value="FE2OG_OXY"/>
    <property type="match status" value="1"/>
</dbReference>
<comment type="function">
    <text evidence="1 2 4 5">2-oxoglutarate-dependent dioxygenase; part of the cla gene cluster that produces clavatol and ortho-quinone methide (PubMed:30811183). The clavatol biosynthesis cluster cla and the terrestric acid cluster tra are both involved in the production of peniphenones and penilactones (PubMed:30811183). The non-reducing PKS claF is responsible for the formation of clavatol from successive condensations of 3 malonyl-CoA units, presumably with a simple acetyl-CoA starter unit, and 2 methylation steps (PubMed:30811183). The esterase claE probably collaborates with claF by catalyzing the hydrolysis of ACP-bound acyl intermediates to free the ACP from stalled intermediates (By similarity). The clavatol oxidase claD then converts clavatol to hydroxyclavatol (PubMed:30811183). Spontaneous dehydration of hydroxyclavatol leads to the accumulation of the highly active ortho-quinone methide (PubMed:30811183, PubMed:31860310). On the other hand, the PKS-NRPS hybrid traA is involved in the formation of crustosic acid, with the help of traB and traD (PubMed:30811183). The polyketide synthase module (PKS) of traA is responsible for the synthesis of the polyketide backbone via the condensation of an acetyl-CoA starter unit with 3 malonyl-CoA units (PubMed:30811183). The downstream nonribosomal peptide synthetase (NRPS) module then amidates the carboxyl end of the polyketide with L-malic acid (PubMed:30811183). Because traA lacks a designated enoylreductase (ER) domain, the required activity is provided the enoyl reductase traG (By similarity). Crustosic acid undergoes decarboxylation and isomerization to the terrestric acid, catalyzed by the 2-oxoglutarate-dependent dioxygenase traH (PubMed:30811183). Both acids are further converted to the 2 gamma-butyrolactones (R)-5-methyltetronic acid and (S)-5-carboxylmethyltetronic acid, with involvement of the cytochrome P450 monooxygenase claJ (PubMed:30811183). Spontaneous addition of the methide to these gamma-butyrolactones leads to peniphenone D and penilactone D, which undergo again stereospecific attacking by methide to give penilactones A and B (PubMed:30811183, PubMed:31860310).</text>
</comment>
<comment type="catalytic activity">
    <reaction evidence="4">
        <text>clavatol + 2-oxoglutarate + O2 = hydroxyclavatol + succinate + CO2</text>
        <dbReference type="Rhea" id="RHEA:70079"/>
        <dbReference type="ChEBI" id="CHEBI:15379"/>
        <dbReference type="ChEBI" id="CHEBI:16526"/>
        <dbReference type="ChEBI" id="CHEBI:16810"/>
        <dbReference type="ChEBI" id="CHEBI:30031"/>
        <dbReference type="ChEBI" id="CHEBI:188925"/>
        <dbReference type="ChEBI" id="CHEBI:188926"/>
    </reaction>
    <physiologicalReaction direction="left-to-right" evidence="4">
        <dbReference type="Rhea" id="RHEA:70080"/>
    </physiologicalReaction>
</comment>
<comment type="cofactor">
    <cofactor evidence="3">
        <name>Fe(2+)</name>
        <dbReference type="ChEBI" id="CHEBI:29033"/>
    </cofactor>
    <text evidence="3">Binds 1 Fe(2+) ion per subunit.</text>
</comment>
<comment type="biophysicochemical properties">
    <kinetics>
        <KM evidence="4">0.3 mM for clavatol</KM>
    </kinetics>
</comment>
<comment type="pathway">
    <text evidence="4">Secondary metabolite biosynthesis.</text>
</comment>
<comment type="disruption phenotype">
    <text evidence="4">Completely abolishes the production of hydroxyclavatol, as well as of the clavatol-derived compounds peniphenone D, penilactone D, penilactone A, penilactone B and hydroxyclavatol (PubMed:30811183). Leads to the accumulation of clavatol (PubMed:30811183).</text>
</comment>
<comment type="similarity">
    <text evidence="7">Belongs to the iron/ascorbate-dependent oxidoreductase family.</text>
</comment>
<proteinExistence type="evidence at protein level"/>
<organism>
    <name type="scientific">Penicillium crustosum</name>
    <name type="common">Blue mold fungus</name>
    <dbReference type="NCBI Taxonomy" id="36656"/>
    <lineage>
        <taxon>Eukaryota</taxon>
        <taxon>Fungi</taxon>
        <taxon>Dikarya</taxon>
        <taxon>Ascomycota</taxon>
        <taxon>Pezizomycotina</taxon>
        <taxon>Eurotiomycetes</taxon>
        <taxon>Eurotiomycetidae</taxon>
        <taxon>Eurotiales</taxon>
        <taxon>Aspergillaceae</taxon>
        <taxon>Penicillium</taxon>
    </lineage>
</organism>
<evidence type="ECO:0000250" key="1">
    <source>
        <dbReference type="UniProtKB" id="A0A0E0RXA7"/>
    </source>
</evidence>
<evidence type="ECO:0000250" key="2">
    <source>
        <dbReference type="UniProtKB" id="A0A161CKG1"/>
    </source>
</evidence>
<evidence type="ECO:0000255" key="3">
    <source>
        <dbReference type="PROSITE-ProRule" id="PRU00805"/>
    </source>
</evidence>
<evidence type="ECO:0000269" key="4">
    <source>
    </source>
</evidence>
<evidence type="ECO:0000269" key="5">
    <source>
    </source>
</evidence>
<evidence type="ECO:0000303" key="6">
    <source>
    </source>
</evidence>
<evidence type="ECO:0000305" key="7"/>
<keyword id="KW-0223">Dioxygenase</keyword>
<keyword id="KW-0408">Iron</keyword>
<keyword id="KW-0479">Metal-binding</keyword>
<keyword id="KW-0560">Oxidoreductase</keyword>
<name>CLAD_PENCR</name>
<protein>
    <recommendedName>
        <fullName evidence="6">Clavatol oxidase claD</fullName>
        <ecNumber evidence="4">1.14.-.-</ecNumber>
    </recommendedName>
    <alternativeName>
        <fullName evidence="6">2-oxoglutarate-dependent dioxygenase claD</fullName>
    </alternativeName>
    <alternativeName>
        <fullName evidence="6">Clavatol biosynthesis cluster protein D</fullName>
    </alternativeName>
</protein>
<feature type="chain" id="PRO_0000455068" description="Clavatol oxidase claD">
    <location>
        <begin position="1"/>
        <end position="338"/>
    </location>
</feature>
<feature type="domain" description="Fe2OG dioxygenase" evidence="3">
    <location>
        <begin position="193"/>
        <end position="299"/>
    </location>
</feature>
<feature type="binding site" evidence="3">
    <location>
        <position position="222"/>
    </location>
    <ligand>
        <name>Fe cation</name>
        <dbReference type="ChEBI" id="CHEBI:24875"/>
    </ligand>
</feature>
<feature type="binding site" evidence="3">
    <location>
        <position position="224"/>
    </location>
    <ligand>
        <name>Fe cation</name>
        <dbReference type="ChEBI" id="CHEBI:24875"/>
    </ligand>
</feature>
<feature type="binding site" evidence="3">
    <location>
        <position position="280"/>
    </location>
    <ligand>
        <name>Fe cation</name>
        <dbReference type="ChEBI" id="CHEBI:24875"/>
    </ligand>
</feature>
<feature type="binding site" evidence="3">
    <location>
        <position position="290"/>
    </location>
    <ligand>
        <name>2-oxoglutarate</name>
        <dbReference type="ChEBI" id="CHEBI:16810"/>
    </ligand>
</feature>